<accession>O49303</accession>
<name>CAR8_ARATH</name>
<dbReference type="EMBL" id="AC002311">
    <property type="protein sequence ID" value="AAC00606.1"/>
    <property type="molecule type" value="Genomic_DNA"/>
</dbReference>
<dbReference type="EMBL" id="CP002684">
    <property type="protein sequence ID" value="AEE30344.1"/>
    <property type="molecule type" value="Genomic_DNA"/>
</dbReference>
<dbReference type="EMBL" id="BT043489">
    <property type="protein sequence ID" value="ACF88494.1"/>
    <property type="molecule type" value="mRNA"/>
</dbReference>
<dbReference type="PIR" id="F86365">
    <property type="entry name" value="F86365"/>
</dbReference>
<dbReference type="RefSeq" id="NP_173727.1">
    <property type="nucleotide sequence ID" value="NM_102162.3"/>
</dbReference>
<dbReference type="SMR" id="O49303"/>
<dbReference type="FunCoup" id="O49303">
    <property type="interactions" value="29"/>
</dbReference>
<dbReference type="STRING" id="3702.O49303"/>
<dbReference type="PaxDb" id="3702-AT1G23140.1"/>
<dbReference type="ProteomicsDB" id="240280"/>
<dbReference type="EnsemblPlants" id="AT1G23140.1">
    <property type="protein sequence ID" value="AT1G23140.1"/>
    <property type="gene ID" value="AT1G23140"/>
</dbReference>
<dbReference type="GeneID" id="838922"/>
<dbReference type="Gramene" id="AT1G23140.1">
    <property type="protein sequence ID" value="AT1G23140.1"/>
    <property type="gene ID" value="AT1G23140"/>
</dbReference>
<dbReference type="KEGG" id="ath:AT1G23140"/>
<dbReference type="Araport" id="AT1G23140"/>
<dbReference type="TAIR" id="AT1G23140">
    <property type="gene designation" value="CAR8"/>
</dbReference>
<dbReference type="eggNOG" id="KOG1030">
    <property type="taxonomic scope" value="Eukaryota"/>
</dbReference>
<dbReference type="HOGENOM" id="CLU_106037_0_0_1"/>
<dbReference type="InParanoid" id="O49303"/>
<dbReference type="OMA" id="IQIEWIN"/>
<dbReference type="OrthoDB" id="73919at2759"/>
<dbReference type="PhylomeDB" id="O49303"/>
<dbReference type="PRO" id="PR:O49303"/>
<dbReference type="Proteomes" id="UP000006548">
    <property type="component" value="Chromosome 1"/>
</dbReference>
<dbReference type="ExpressionAtlas" id="O49303">
    <property type="expression patterns" value="baseline and differential"/>
</dbReference>
<dbReference type="GO" id="GO:0005829">
    <property type="term" value="C:cytosol"/>
    <property type="evidence" value="ECO:0007005"/>
    <property type="project" value="TAIR"/>
</dbReference>
<dbReference type="GO" id="GO:0005634">
    <property type="term" value="C:nucleus"/>
    <property type="evidence" value="ECO:0000250"/>
    <property type="project" value="UniProtKB"/>
</dbReference>
<dbReference type="GO" id="GO:0005886">
    <property type="term" value="C:plasma membrane"/>
    <property type="evidence" value="ECO:0007005"/>
    <property type="project" value="TAIR"/>
</dbReference>
<dbReference type="GO" id="GO:0005096">
    <property type="term" value="F:GTPase activator activity"/>
    <property type="evidence" value="ECO:0000250"/>
    <property type="project" value="UniProtKB"/>
</dbReference>
<dbReference type="GO" id="GO:0046872">
    <property type="term" value="F:metal ion binding"/>
    <property type="evidence" value="ECO:0007669"/>
    <property type="project" value="UniProtKB-KW"/>
</dbReference>
<dbReference type="GO" id="GO:0005543">
    <property type="term" value="F:phospholipid binding"/>
    <property type="evidence" value="ECO:0000250"/>
    <property type="project" value="UniProtKB"/>
</dbReference>
<dbReference type="GO" id="GO:0009738">
    <property type="term" value="P:abscisic acid-activated signaling pathway"/>
    <property type="evidence" value="ECO:0007669"/>
    <property type="project" value="UniProtKB-KW"/>
</dbReference>
<dbReference type="GO" id="GO:0009789">
    <property type="term" value="P:positive regulation of abscisic acid-activated signaling pathway"/>
    <property type="evidence" value="ECO:0000250"/>
    <property type="project" value="UniProtKB"/>
</dbReference>
<dbReference type="GO" id="GO:0043547">
    <property type="term" value="P:positive regulation of GTPase activity"/>
    <property type="evidence" value="ECO:0000250"/>
    <property type="project" value="UniProtKB"/>
</dbReference>
<dbReference type="CDD" id="cd04038">
    <property type="entry name" value="C2_ArfGAP"/>
    <property type="match status" value="1"/>
</dbReference>
<dbReference type="Gene3D" id="2.60.40.150">
    <property type="entry name" value="C2 domain"/>
    <property type="match status" value="1"/>
</dbReference>
<dbReference type="InterPro" id="IPR000008">
    <property type="entry name" value="C2_dom"/>
</dbReference>
<dbReference type="InterPro" id="IPR035892">
    <property type="entry name" value="C2_domain_sf"/>
</dbReference>
<dbReference type="InterPro" id="IPR044562">
    <property type="entry name" value="CAR1-11"/>
</dbReference>
<dbReference type="PANTHER" id="PTHR45933">
    <property type="entry name" value="PROTEIN C2-DOMAIN ABA-RELATED 4"/>
    <property type="match status" value="1"/>
</dbReference>
<dbReference type="PANTHER" id="PTHR45933:SF25">
    <property type="entry name" value="PROTEIN C2-DOMAIN ABA-RELATED 8"/>
    <property type="match status" value="1"/>
</dbReference>
<dbReference type="Pfam" id="PF00168">
    <property type="entry name" value="C2"/>
    <property type="match status" value="1"/>
</dbReference>
<dbReference type="SMART" id="SM00239">
    <property type="entry name" value="C2"/>
    <property type="match status" value="1"/>
</dbReference>
<dbReference type="SUPFAM" id="SSF49562">
    <property type="entry name" value="C2 domain (Calcium/lipid-binding domain, CaLB)"/>
    <property type="match status" value="1"/>
</dbReference>
<dbReference type="PROSITE" id="PS50004">
    <property type="entry name" value="C2"/>
    <property type="match status" value="1"/>
</dbReference>
<comment type="function">
    <text evidence="1 2">Stimulates the GTPase/ATPase activities of Obg-like ATPases (By similarity). Mediates the transient calcium-dependent interaction of PYR/PYL/RCAR abscisic acid (ABA) receptors with the plasma membrane and thus regulates ABA sensitivity (By similarity).</text>
</comment>
<comment type="subunit">
    <text evidence="1">Binds to PYR/PYL/RCAR abscisic acid intracellular receptors in an ABA-independent manner, both at the plasma membrane and in the nucleus.</text>
</comment>
<comment type="subcellular location">
    <subcellularLocation>
        <location evidence="1">Cell membrane</location>
    </subcellularLocation>
    <subcellularLocation>
        <location evidence="1">Nucleus</location>
    </subcellularLocation>
</comment>
<comment type="similarity">
    <text evidence="6">Belongs to the plant CAR protein family.</text>
</comment>
<organism evidence="9">
    <name type="scientific">Arabidopsis thaliana</name>
    <name type="common">Mouse-ear cress</name>
    <dbReference type="NCBI Taxonomy" id="3702"/>
    <lineage>
        <taxon>Eukaryota</taxon>
        <taxon>Viridiplantae</taxon>
        <taxon>Streptophyta</taxon>
        <taxon>Embryophyta</taxon>
        <taxon>Tracheophyta</taxon>
        <taxon>Spermatophyta</taxon>
        <taxon>Magnoliopsida</taxon>
        <taxon>eudicotyledons</taxon>
        <taxon>Gunneridae</taxon>
        <taxon>Pentapetalae</taxon>
        <taxon>rosids</taxon>
        <taxon>malvids</taxon>
        <taxon>Brassicales</taxon>
        <taxon>Brassicaceae</taxon>
        <taxon>Camelineae</taxon>
        <taxon>Arabidopsis</taxon>
    </lineage>
</organism>
<protein>
    <recommendedName>
        <fullName evidence="5">Protein C2-DOMAIN ABA-RELATED 8</fullName>
    </recommendedName>
</protein>
<reference key="1">
    <citation type="journal article" date="2000" name="Nature">
        <title>Sequence and analysis of chromosome 1 of the plant Arabidopsis thaliana.</title>
        <authorList>
            <person name="Theologis A."/>
            <person name="Ecker J.R."/>
            <person name="Palm C.J."/>
            <person name="Federspiel N.A."/>
            <person name="Kaul S."/>
            <person name="White O."/>
            <person name="Alonso J."/>
            <person name="Altafi H."/>
            <person name="Araujo R."/>
            <person name="Bowman C.L."/>
            <person name="Brooks S.Y."/>
            <person name="Buehler E."/>
            <person name="Chan A."/>
            <person name="Chao Q."/>
            <person name="Chen H."/>
            <person name="Cheuk R.F."/>
            <person name="Chin C.W."/>
            <person name="Chung M.K."/>
            <person name="Conn L."/>
            <person name="Conway A.B."/>
            <person name="Conway A.R."/>
            <person name="Creasy T.H."/>
            <person name="Dewar K."/>
            <person name="Dunn P."/>
            <person name="Etgu P."/>
            <person name="Feldblyum T.V."/>
            <person name="Feng J.-D."/>
            <person name="Fong B."/>
            <person name="Fujii C.Y."/>
            <person name="Gill J.E."/>
            <person name="Goldsmith A.D."/>
            <person name="Haas B."/>
            <person name="Hansen N.F."/>
            <person name="Hughes B."/>
            <person name="Huizar L."/>
            <person name="Hunter J.L."/>
            <person name="Jenkins J."/>
            <person name="Johnson-Hopson C."/>
            <person name="Khan S."/>
            <person name="Khaykin E."/>
            <person name="Kim C.J."/>
            <person name="Koo H.L."/>
            <person name="Kremenetskaia I."/>
            <person name="Kurtz D.B."/>
            <person name="Kwan A."/>
            <person name="Lam B."/>
            <person name="Langin-Hooper S."/>
            <person name="Lee A."/>
            <person name="Lee J.M."/>
            <person name="Lenz C.A."/>
            <person name="Li J.H."/>
            <person name="Li Y.-P."/>
            <person name="Lin X."/>
            <person name="Liu S.X."/>
            <person name="Liu Z.A."/>
            <person name="Luros J.S."/>
            <person name="Maiti R."/>
            <person name="Marziali A."/>
            <person name="Militscher J."/>
            <person name="Miranda M."/>
            <person name="Nguyen M."/>
            <person name="Nierman W.C."/>
            <person name="Osborne B.I."/>
            <person name="Pai G."/>
            <person name="Peterson J."/>
            <person name="Pham P.K."/>
            <person name="Rizzo M."/>
            <person name="Rooney T."/>
            <person name="Rowley D."/>
            <person name="Sakano H."/>
            <person name="Salzberg S.L."/>
            <person name="Schwartz J.R."/>
            <person name="Shinn P."/>
            <person name="Southwick A.M."/>
            <person name="Sun H."/>
            <person name="Tallon L.J."/>
            <person name="Tambunga G."/>
            <person name="Toriumi M.J."/>
            <person name="Town C.D."/>
            <person name="Utterback T."/>
            <person name="Van Aken S."/>
            <person name="Vaysberg M."/>
            <person name="Vysotskaia V.S."/>
            <person name="Walker M."/>
            <person name="Wu D."/>
            <person name="Yu G."/>
            <person name="Fraser C.M."/>
            <person name="Venter J.C."/>
            <person name="Davis R.W."/>
        </authorList>
    </citation>
    <scope>NUCLEOTIDE SEQUENCE [LARGE SCALE GENOMIC DNA]</scope>
    <source>
        <strain>cv. Columbia</strain>
    </source>
</reference>
<reference key="2">
    <citation type="journal article" date="2017" name="Plant J.">
        <title>Araport11: a complete reannotation of the Arabidopsis thaliana reference genome.</title>
        <authorList>
            <person name="Cheng C.Y."/>
            <person name="Krishnakumar V."/>
            <person name="Chan A.P."/>
            <person name="Thibaud-Nissen F."/>
            <person name="Schobel S."/>
            <person name="Town C.D."/>
        </authorList>
    </citation>
    <scope>GENOME REANNOTATION</scope>
    <source>
        <strain>cv. Columbia</strain>
    </source>
</reference>
<reference key="3">
    <citation type="submission" date="2008-07" db="EMBL/GenBank/DDBJ databases">
        <title>Arabidopsis ORF clones.</title>
        <authorList>
            <person name="de los Reyes C."/>
            <person name="Quan R."/>
            <person name="Chen H."/>
            <person name="Bautista V."/>
            <person name="Kim C.J."/>
            <person name="Ecker J.R."/>
        </authorList>
    </citation>
    <scope>NUCLEOTIDE SEQUENCE [LARGE SCALE MRNA]</scope>
    <source>
        <strain>cv. Columbia</strain>
    </source>
</reference>
<reference key="4">
    <citation type="journal article" date="2014" name="Plant Cell">
        <title>C2-domain abscisic acid-related proteins mediate the interaction of PYR/PYL/RCAR abscisic acid receptors with the plasma membrane and regulate abscisic acid sensitivity in Arabidopsis.</title>
        <authorList>
            <person name="Rodriguez L."/>
            <person name="Gonzalez-Guzman M."/>
            <person name="Diaz M."/>
            <person name="Rodrigues A."/>
            <person name="Izquierdo-Garcia A.C."/>
            <person name="Peirats-Llobet M."/>
            <person name="Fernandez M.A."/>
            <person name="Antoni R."/>
            <person name="Fernandez D."/>
            <person name="Marquez J.A."/>
            <person name="Mulet J.M."/>
            <person name="Albert A."/>
            <person name="Rodriguez P.L."/>
        </authorList>
    </citation>
    <scope>GENE FAMILY</scope>
    <scope>NOMENCLATURE</scope>
</reference>
<feature type="chain" id="PRO_0000433318" description="Protein C2-DOMAIN ABA-RELATED 8">
    <location>
        <begin position="1"/>
        <end position="165"/>
    </location>
</feature>
<feature type="domain" description="C2" evidence="4">
    <location>
        <begin position="1"/>
        <end position="106"/>
    </location>
</feature>
<feature type="binding site" evidence="2">
    <location>
        <position position="21"/>
    </location>
    <ligand>
        <name>Ca(2+)</name>
        <dbReference type="ChEBI" id="CHEBI:29108"/>
        <label>1</label>
    </ligand>
</feature>
<feature type="binding site" evidence="2">
    <location>
        <position position="22"/>
    </location>
    <ligand>
        <name>Ca(2+)</name>
        <dbReference type="ChEBI" id="CHEBI:29108"/>
        <label>1</label>
    </ligand>
</feature>
<feature type="binding site" evidence="2">
    <location>
        <position position="22"/>
    </location>
    <ligand>
        <name>Ca(2+)</name>
        <dbReference type="ChEBI" id="CHEBI:29108"/>
        <label>2</label>
    </ligand>
</feature>
<feature type="binding site" evidence="2">
    <location>
        <position position="27"/>
    </location>
    <ligand>
        <name>Ca(2+)</name>
        <dbReference type="ChEBI" id="CHEBI:29108"/>
        <label>2</label>
    </ligand>
</feature>
<feature type="binding site" evidence="2">
    <location>
        <position position="73"/>
    </location>
    <ligand>
        <name>Ca(2+)</name>
        <dbReference type="ChEBI" id="CHEBI:29108"/>
        <label>1</label>
    </ligand>
</feature>
<feature type="binding site" evidence="2">
    <location>
        <position position="73"/>
    </location>
    <ligand>
        <name>Ca(2+)</name>
        <dbReference type="ChEBI" id="CHEBI:29108"/>
        <label>2</label>
    </ligand>
</feature>
<feature type="binding site" evidence="2">
    <location>
        <position position="74"/>
    </location>
    <ligand>
        <name>Ca(2+)</name>
        <dbReference type="ChEBI" id="CHEBI:29108"/>
        <label>2</label>
    </ligand>
</feature>
<feature type="binding site" evidence="2">
    <location>
        <position position="75"/>
    </location>
    <ligand>
        <name>Ca(2+)</name>
        <dbReference type="ChEBI" id="CHEBI:29108"/>
        <label>1</label>
    </ligand>
</feature>
<feature type="binding site" evidence="2">
    <location>
        <position position="75"/>
    </location>
    <ligand>
        <name>Ca(2+)</name>
        <dbReference type="ChEBI" id="CHEBI:29108"/>
        <label>2</label>
    </ligand>
</feature>
<feature type="binding site" evidence="2">
    <location>
        <position position="81"/>
    </location>
    <ligand>
        <name>Ca(2+)</name>
        <dbReference type="ChEBI" id="CHEBI:29108"/>
        <label>1</label>
    </ligand>
</feature>
<feature type="modified residue" description="N-acetylmethionine" evidence="3">
    <location>
        <position position="1"/>
    </location>
</feature>
<sequence length="165" mass="18569">MENLVGLLRIRVKRGINLVSRDSNTSDPFVVVTMGSQKLKTRGVENSCNPEWDDELTLGINDPNQHVTLEVYDKDTFTSHDPMGDAEIDIKPFFEVQGTDIQELTNGTEIRRVKPSGDNCLAEESRIIFSNGKILQDMILQLRNVESGEVEIQIEWINVTGSSDF</sequence>
<evidence type="ECO:0000250" key="1">
    <source>
        <dbReference type="UniProtKB" id="Q9FHP6"/>
    </source>
</evidence>
<evidence type="ECO:0000250" key="2">
    <source>
        <dbReference type="UniProtKB" id="Q9LVH4"/>
    </source>
</evidence>
<evidence type="ECO:0000250" key="3">
    <source>
        <dbReference type="UniProtKB" id="Q9SSL1"/>
    </source>
</evidence>
<evidence type="ECO:0000255" key="4">
    <source>
        <dbReference type="PROSITE-ProRule" id="PRU00041"/>
    </source>
</evidence>
<evidence type="ECO:0000303" key="5">
    <source>
    </source>
</evidence>
<evidence type="ECO:0000305" key="6">
    <source>
    </source>
</evidence>
<evidence type="ECO:0000312" key="7">
    <source>
        <dbReference type="Araport" id="AT1G23140"/>
    </source>
</evidence>
<evidence type="ECO:0000312" key="8">
    <source>
        <dbReference type="EMBL" id="AAC00606.1"/>
    </source>
</evidence>
<evidence type="ECO:0000312" key="9">
    <source>
        <dbReference type="Proteomes" id="UP000006548"/>
    </source>
</evidence>
<keyword id="KW-0938">Abscisic acid signaling pathway</keyword>
<keyword id="KW-0007">Acetylation</keyword>
<keyword id="KW-0106">Calcium</keyword>
<keyword id="KW-1003">Cell membrane</keyword>
<keyword id="KW-0343">GTPase activation</keyword>
<keyword id="KW-0446">Lipid-binding</keyword>
<keyword id="KW-0472">Membrane</keyword>
<keyword id="KW-0479">Metal-binding</keyword>
<keyword id="KW-0539">Nucleus</keyword>
<keyword id="KW-1185">Reference proteome</keyword>
<gene>
    <name evidence="5" type="primary">CAR8</name>
    <name evidence="7" type="ordered locus">At1g23140</name>
    <name evidence="8" type="ORF">T26J12.9</name>
</gene>
<proteinExistence type="evidence at transcript level"/>